<protein>
    <recommendedName>
        <fullName evidence="1">Chaperonin GroEL</fullName>
        <ecNumber evidence="1">5.6.1.7</ecNumber>
    </recommendedName>
    <alternativeName>
        <fullName evidence="1">60 kDa chaperonin</fullName>
    </alternativeName>
    <alternativeName>
        <fullName evidence="1">Chaperonin-60</fullName>
        <shortName evidence="1">Cpn60</shortName>
    </alternativeName>
</protein>
<organism>
    <name type="scientific">Helicobacter pylori (strain P12)</name>
    <dbReference type="NCBI Taxonomy" id="570508"/>
    <lineage>
        <taxon>Bacteria</taxon>
        <taxon>Pseudomonadati</taxon>
        <taxon>Campylobacterota</taxon>
        <taxon>Epsilonproteobacteria</taxon>
        <taxon>Campylobacterales</taxon>
        <taxon>Helicobacteraceae</taxon>
        <taxon>Helicobacter</taxon>
    </lineage>
</organism>
<evidence type="ECO:0000255" key="1">
    <source>
        <dbReference type="HAMAP-Rule" id="MF_00600"/>
    </source>
</evidence>
<dbReference type="EC" id="5.6.1.7" evidence="1"/>
<dbReference type="EMBL" id="CP001217">
    <property type="protein sequence ID" value="ACJ07168.1"/>
    <property type="molecule type" value="Genomic_DNA"/>
</dbReference>
<dbReference type="SMR" id="B6JPA7"/>
<dbReference type="KEGG" id="hpp:HPP12_0008"/>
<dbReference type="HOGENOM" id="CLU_016503_3_0_7"/>
<dbReference type="Proteomes" id="UP000008198">
    <property type="component" value="Chromosome"/>
</dbReference>
<dbReference type="GO" id="GO:0005737">
    <property type="term" value="C:cytoplasm"/>
    <property type="evidence" value="ECO:0007669"/>
    <property type="project" value="UniProtKB-SubCell"/>
</dbReference>
<dbReference type="GO" id="GO:0005524">
    <property type="term" value="F:ATP binding"/>
    <property type="evidence" value="ECO:0007669"/>
    <property type="project" value="UniProtKB-UniRule"/>
</dbReference>
<dbReference type="GO" id="GO:0140662">
    <property type="term" value="F:ATP-dependent protein folding chaperone"/>
    <property type="evidence" value="ECO:0007669"/>
    <property type="project" value="InterPro"/>
</dbReference>
<dbReference type="GO" id="GO:0016853">
    <property type="term" value="F:isomerase activity"/>
    <property type="evidence" value="ECO:0007669"/>
    <property type="project" value="UniProtKB-KW"/>
</dbReference>
<dbReference type="GO" id="GO:0051082">
    <property type="term" value="F:unfolded protein binding"/>
    <property type="evidence" value="ECO:0007669"/>
    <property type="project" value="UniProtKB-UniRule"/>
</dbReference>
<dbReference type="GO" id="GO:0042026">
    <property type="term" value="P:protein refolding"/>
    <property type="evidence" value="ECO:0007669"/>
    <property type="project" value="UniProtKB-UniRule"/>
</dbReference>
<dbReference type="CDD" id="cd03344">
    <property type="entry name" value="GroEL"/>
    <property type="match status" value="1"/>
</dbReference>
<dbReference type="FunFam" id="3.50.7.10:FF:000001">
    <property type="entry name" value="60 kDa chaperonin"/>
    <property type="match status" value="1"/>
</dbReference>
<dbReference type="Gene3D" id="3.50.7.10">
    <property type="entry name" value="GroEL"/>
    <property type="match status" value="1"/>
</dbReference>
<dbReference type="Gene3D" id="1.10.560.10">
    <property type="entry name" value="GroEL-like equatorial domain"/>
    <property type="match status" value="1"/>
</dbReference>
<dbReference type="Gene3D" id="3.30.260.10">
    <property type="entry name" value="TCP-1-like chaperonin intermediate domain"/>
    <property type="match status" value="1"/>
</dbReference>
<dbReference type="HAMAP" id="MF_00600">
    <property type="entry name" value="CH60"/>
    <property type="match status" value="1"/>
</dbReference>
<dbReference type="InterPro" id="IPR018370">
    <property type="entry name" value="Chaperonin_Cpn60_CS"/>
</dbReference>
<dbReference type="InterPro" id="IPR001844">
    <property type="entry name" value="Cpn60/GroEL"/>
</dbReference>
<dbReference type="InterPro" id="IPR002423">
    <property type="entry name" value="Cpn60/GroEL/TCP-1"/>
</dbReference>
<dbReference type="InterPro" id="IPR027409">
    <property type="entry name" value="GroEL-like_apical_dom_sf"/>
</dbReference>
<dbReference type="InterPro" id="IPR027413">
    <property type="entry name" value="GROEL-like_equatorial_sf"/>
</dbReference>
<dbReference type="InterPro" id="IPR027410">
    <property type="entry name" value="TCP-1-like_intermed_sf"/>
</dbReference>
<dbReference type="NCBIfam" id="TIGR02348">
    <property type="entry name" value="GroEL"/>
    <property type="match status" value="1"/>
</dbReference>
<dbReference type="NCBIfam" id="NF000592">
    <property type="entry name" value="PRK00013.1"/>
    <property type="match status" value="1"/>
</dbReference>
<dbReference type="NCBIfam" id="NF009487">
    <property type="entry name" value="PRK12849.1"/>
    <property type="match status" value="1"/>
</dbReference>
<dbReference type="NCBIfam" id="NF009488">
    <property type="entry name" value="PRK12850.1"/>
    <property type="match status" value="1"/>
</dbReference>
<dbReference type="NCBIfam" id="NF009489">
    <property type="entry name" value="PRK12851.1"/>
    <property type="match status" value="1"/>
</dbReference>
<dbReference type="PANTHER" id="PTHR45633">
    <property type="entry name" value="60 KDA HEAT SHOCK PROTEIN, MITOCHONDRIAL"/>
    <property type="match status" value="1"/>
</dbReference>
<dbReference type="Pfam" id="PF00118">
    <property type="entry name" value="Cpn60_TCP1"/>
    <property type="match status" value="1"/>
</dbReference>
<dbReference type="PRINTS" id="PR00298">
    <property type="entry name" value="CHAPERONIN60"/>
</dbReference>
<dbReference type="SUPFAM" id="SSF52029">
    <property type="entry name" value="GroEL apical domain-like"/>
    <property type="match status" value="1"/>
</dbReference>
<dbReference type="SUPFAM" id="SSF48592">
    <property type="entry name" value="GroEL equatorial domain-like"/>
    <property type="match status" value="1"/>
</dbReference>
<dbReference type="SUPFAM" id="SSF54849">
    <property type="entry name" value="GroEL-intermediate domain like"/>
    <property type="match status" value="1"/>
</dbReference>
<dbReference type="PROSITE" id="PS00296">
    <property type="entry name" value="CHAPERONINS_CPN60"/>
    <property type="match status" value="1"/>
</dbReference>
<gene>
    <name evidence="1" type="primary">groEL</name>
    <name evidence="1" type="synonym">groL</name>
    <name type="ordered locus">HPP12_0008</name>
</gene>
<proteinExistence type="inferred from homology"/>
<accession>B6JPA7</accession>
<feature type="chain" id="PRO_1000130023" description="Chaperonin GroEL">
    <location>
        <begin position="1"/>
        <end position="546"/>
    </location>
</feature>
<feature type="binding site" evidence="1">
    <location>
        <begin position="29"/>
        <end position="32"/>
    </location>
    <ligand>
        <name>ATP</name>
        <dbReference type="ChEBI" id="CHEBI:30616"/>
    </ligand>
</feature>
<feature type="binding site" evidence="1">
    <location>
        <position position="50"/>
    </location>
    <ligand>
        <name>ATP</name>
        <dbReference type="ChEBI" id="CHEBI:30616"/>
    </ligand>
</feature>
<feature type="binding site" evidence="1">
    <location>
        <begin position="86"/>
        <end position="90"/>
    </location>
    <ligand>
        <name>ATP</name>
        <dbReference type="ChEBI" id="CHEBI:30616"/>
    </ligand>
</feature>
<feature type="binding site" evidence="1">
    <location>
        <position position="414"/>
    </location>
    <ligand>
        <name>ATP</name>
        <dbReference type="ChEBI" id="CHEBI:30616"/>
    </ligand>
</feature>
<feature type="binding site" evidence="1">
    <location>
        <position position="492"/>
    </location>
    <ligand>
        <name>ATP</name>
        <dbReference type="ChEBI" id="CHEBI:30616"/>
    </ligand>
</feature>
<comment type="function">
    <text evidence="1">Together with its co-chaperonin GroES, plays an essential role in assisting protein folding. The GroEL-GroES system forms a nano-cage that allows encapsulation of the non-native substrate proteins and provides a physical environment optimized to promote and accelerate protein folding.</text>
</comment>
<comment type="catalytic activity">
    <reaction evidence="1">
        <text>ATP + H2O + a folded polypeptide = ADP + phosphate + an unfolded polypeptide.</text>
        <dbReference type="EC" id="5.6.1.7"/>
    </reaction>
</comment>
<comment type="subunit">
    <text evidence="1">Forms a cylinder of 14 subunits composed of two heptameric rings stacked back-to-back. Interacts with the co-chaperonin GroES.</text>
</comment>
<comment type="subcellular location">
    <subcellularLocation>
        <location evidence="1">Cytoplasm</location>
    </subcellularLocation>
</comment>
<comment type="similarity">
    <text evidence="1">Belongs to the chaperonin (HSP60) family.</text>
</comment>
<sequence length="546" mass="58300">MAKEIKFSDSARNLLFEGVRQLHDAVKVTMGPRGRNVLIQKSYGAPSITKDGVSVAKEIELSCPVANMGAQLVKEVASKTADAAGDGTTTATVLAYSIFKEGLRNITAGANPIEVKRGMDKAAEAIINELKKASKKVGGKEEITQVATISANSDHNIGKLIADAMEKVGKDGVITVEEAKGIEDELDVVEGMQFDRGYLSPYFVTNAEKMTAQLDNAYILLTDKKISSMKDILPLLEKTMKEGKPLLIIAEDIEGEALTTLVVNKLRGVLNIAAVKAPGFGDRRKEMLKDIAILTGGQVISEELGLSLENAEVEFLGKAGRIVIDKDNTTIVDGKGHSDDVKDRVVQIKTQIASTTSDYDKEKLQERLAKLSGGVAVIKVGAASEVEMKEKKDRVDDALSATKAAVEEGIVIGGGAALIRAAQKVHLNLHDDEKVGYEIIMRAIKAPLAQIAINAGYDGGVVVNEVEKHEGHFGFNASNGKYVDMFKEGIIDPLKVERIALQNAVSVSSLLLTTEATVHEIKEEKATPAMPDMGGMGGMGGMGGMM</sequence>
<keyword id="KW-0067">ATP-binding</keyword>
<keyword id="KW-0143">Chaperone</keyword>
<keyword id="KW-0963">Cytoplasm</keyword>
<keyword id="KW-0413">Isomerase</keyword>
<keyword id="KW-0547">Nucleotide-binding</keyword>
<keyword id="KW-0346">Stress response</keyword>
<name>CH60_HELP2</name>
<reference key="1">
    <citation type="submission" date="2008-10" db="EMBL/GenBank/DDBJ databases">
        <title>The complete genome sequence of Helicobacter pylori strain P12.</title>
        <authorList>
            <person name="Fischer W."/>
            <person name="Windhager L."/>
            <person name="Karnholz A."/>
            <person name="Zeiller M."/>
            <person name="Zimmer R."/>
            <person name="Haas R."/>
        </authorList>
    </citation>
    <scope>NUCLEOTIDE SEQUENCE [LARGE SCALE GENOMIC DNA]</scope>
    <source>
        <strain>P12</strain>
    </source>
</reference>